<proteinExistence type="inferred from homology"/>
<protein>
    <recommendedName>
        <fullName evidence="1">Ribosomal RNA small subunit methyltransferase J</fullName>
        <ecNumber evidence="1">2.1.1.242</ecNumber>
    </recommendedName>
    <alternativeName>
        <fullName evidence="1">16S rRNA m2G1516 methyltransferase</fullName>
    </alternativeName>
    <alternativeName>
        <fullName evidence="1">rRNA (guanine-N(2)-)-methyltransferase</fullName>
    </alternativeName>
</protein>
<sequence length="250" mass="26949">MKICLIDETGTGDGALSVLAARWGLEHDEDNLMALVLTPEHLELRKRDEPKLGGIFVDFVGGAMAHRRKFGGGRGEAVAKAVGIKGDYLPDVVDATAGLGRDAFVLASVGCRVRMLERNPVVAALLDDGLARGYADAEIGGWLQERLQLIHASSLTALTDITPRPQVVYLDPMFPHKQKSALVKKEMRVFQSLVGPDLDADGLLEPARLLATKRVVVKRPDYAPPLANVATPNAVVTKGHRFDIYAGTPV</sequence>
<organism>
    <name type="scientific">Escherichia coli O17:K52:H18 (strain UMN026 / ExPEC)</name>
    <dbReference type="NCBI Taxonomy" id="585056"/>
    <lineage>
        <taxon>Bacteria</taxon>
        <taxon>Pseudomonadati</taxon>
        <taxon>Pseudomonadota</taxon>
        <taxon>Gammaproteobacteria</taxon>
        <taxon>Enterobacterales</taxon>
        <taxon>Enterobacteriaceae</taxon>
        <taxon>Escherichia</taxon>
    </lineage>
</organism>
<gene>
    <name evidence="1" type="primary">rsmJ</name>
    <name type="synonym">yhiQ</name>
    <name type="ordered locus">ECUMN_3982</name>
</gene>
<keyword id="KW-0963">Cytoplasm</keyword>
<keyword id="KW-0489">Methyltransferase</keyword>
<keyword id="KW-0698">rRNA processing</keyword>
<keyword id="KW-0949">S-adenosyl-L-methionine</keyword>
<keyword id="KW-0808">Transferase</keyword>
<name>RSMJ_ECOLU</name>
<comment type="function">
    <text evidence="1">Specifically methylates the guanosine in position 1516 of 16S rRNA.</text>
</comment>
<comment type="catalytic activity">
    <reaction evidence="1">
        <text>guanosine(1516) in 16S rRNA + S-adenosyl-L-methionine = N(2)-methylguanosine(1516) in 16S rRNA + S-adenosyl-L-homocysteine + H(+)</text>
        <dbReference type="Rhea" id="RHEA:43220"/>
        <dbReference type="Rhea" id="RHEA-COMP:10412"/>
        <dbReference type="Rhea" id="RHEA-COMP:10413"/>
        <dbReference type="ChEBI" id="CHEBI:15378"/>
        <dbReference type="ChEBI" id="CHEBI:57856"/>
        <dbReference type="ChEBI" id="CHEBI:59789"/>
        <dbReference type="ChEBI" id="CHEBI:74269"/>
        <dbReference type="ChEBI" id="CHEBI:74481"/>
        <dbReference type="EC" id="2.1.1.242"/>
    </reaction>
</comment>
<comment type="subcellular location">
    <subcellularLocation>
        <location evidence="1">Cytoplasm</location>
    </subcellularLocation>
</comment>
<comment type="similarity">
    <text evidence="1">Belongs to the methyltransferase superfamily. RsmJ family.</text>
</comment>
<reference key="1">
    <citation type="journal article" date="2009" name="PLoS Genet.">
        <title>Organised genome dynamics in the Escherichia coli species results in highly diverse adaptive paths.</title>
        <authorList>
            <person name="Touchon M."/>
            <person name="Hoede C."/>
            <person name="Tenaillon O."/>
            <person name="Barbe V."/>
            <person name="Baeriswyl S."/>
            <person name="Bidet P."/>
            <person name="Bingen E."/>
            <person name="Bonacorsi S."/>
            <person name="Bouchier C."/>
            <person name="Bouvet O."/>
            <person name="Calteau A."/>
            <person name="Chiapello H."/>
            <person name="Clermont O."/>
            <person name="Cruveiller S."/>
            <person name="Danchin A."/>
            <person name="Diard M."/>
            <person name="Dossat C."/>
            <person name="Karoui M.E."/>
            <person name="Frapy E."/>
            <person name="Garry L."/>
            <person name="Ghigo J.M."/>
            <person name="Gilles A.M."/>
            <person name="Johnson J."/>
            <person name="Le Bouguenec C."/>
            <person name="Lescat M."/>
            <person name="Mangenot S."/>
            <person name="Martinez-Jehanne V."/>
            <person name="Matic I."/>
            <person name="Nassif X."/>
            <person name="Oztas S."/>
            <person name="Petit M.A."/>
            <person name="Pichon C."/>
            <person name="Rouy Z."/>
            <person name="Ruf C.S."/>
            <person name="Schneider D."/>
            <person name="Tourret J."/>
            <person name="Vacherie B."/>
            <person name="Vallenet D."/>
            <person name="Medigue C."/>
            <person name="Rocha E.P.C."/>
            <person name="Denamur E."/>
        </authorList>
    </citation>
    <scope>NUCLEOTIDE SEQUENCE [LARGE SCALE GENOMIC DNA]</scope>
    <source>
        <strain>UMN026 / ExPEC</strain>
    </source>
</reference>
<feature type="chain" id="PRO_1000198495" description="Ribosomal RNA small subunit methyltransferase J">
    <location>
        <begin position="1"/>
        <end position="250"/>
    </location>
</feature>
<feature type="binding site" evidence="1">
    <location>
        <begin position="101"/>
        <end position="102"/>
    </location>
    <ligand>
        <name>S-adenosyl-L-methionine</name>
        <dbReference type="ChEBI" id="CHEBI:59789"/>
    </ligand>
</feature>
<feature type="binding site" evidence="1">
    <location>
        <begin position="117"/>
        <end position="118"/>
    </location>
    <ligand>
        <name>S-adenosyl-L-methionine</name>
        <dbReference type="ChEBI" id="CHEBI:59789"/>
    </ligand>
</feature>
<feature type="binding site" evidence="1">
    <location>
        <begin position="153"/>
        <end position="154"/>
    </location>
    <ligand>
        <name>S-adenosyl-L-methionine</name>
        <dbReference type="ChEBI" id="CHEBI:59789"/>
    </ligand>
</feature>
<feature type="binding site" evidence="1">
    <location>
        <position position="171"/>
    </location>
    <ligand>
        <name>S-adenosyl-L-methionine</name>
        <dbReference type="ChEBI" id="CHEBI:59789"/>
    </ligand>
</feature>
<evidence type="ECO:0000255" key="1">
    <source>
        <dbReference type="HAMAP-Rule" id="MF_01523"/>
    </source>
</evidence>
<accession>B7NEC8</accession>
<dbReference type="EC" id="2.1.1.242" evidence="1"/>
<dbReference type="EMBL" id="CU928163">
    <property type="protein sequence ID" value="CAR15128.1"/>
    <property type="molecule type" value="Genomic_DNA"/>
</dbReference>
<dbReference type="RefSeq" id="WP_000686620.1">
    <property type="nucleotide sequence ID" value="NC_011751.1"/>
</dbReference>
<dbReference type="RefSeq" id="YP_002414633.1">
    <property type="nucleotide sequence ID" value="NC_011751.1"/>
</dbReference>
<dbReference type="SMR" id="B7NEC8"/>
<dbReference type="STRING" id="585056.ECUMN_3982"/>
<dbReference type="KEGG" id="eum:ECUMN_3982"/>
<dbReference type="PATRIC" id="fig|585056.7.peg.4156"/>
<dbReference type="HOGENOM" id="CLU_076324_0_0_6"/>
<dbReference type="Proteomes" id="UP000007097">
    <property type="component" value="Chromosome"/>
</dbReference>
<dbReference type="GO" id="GO:0005737">
    <property type="term" value="C:cytoplasm"/>
    <property type="evidence" value="ECO:0007669"/>
    <property type="project" value="UniProtKB-SubCell"/>
</dbReference>
<dbReference type="GO" id="GO:0008990">
    <property type="term" value="F:rRNA (guanine-N2-)-methyltransferase activity"/>
    <property type="evidence" value="ECO:0007669"/>
    <property type="project" value="UniProtKB-UniRule"/>
</dbReference>
<dbReference type="CDD" id="cd02440">
    <property type="entry name" value="AdoMet_MTases"/>
    <property type="match status" value="1"/>
</dbReference>
<dbReference type="FunFam" id="3.40.1630.10:FF:000001">
    <property type="entry name" value="Ribosomal RNA small subunit methyltransferase J"/>
    <property type="match status" value="1"/>
</dbReference>
<dbReference type="FunFam" id="3.40.50.150:FF:000072">
    <property type="entry name" value="Ribosomal RNA small subunit methyltransferase J"/>
    <property type="match status" value="1"/>
</dbReference>
<dbReference type="Gene3D" id="3.40.50.150">
    <property type="entry name" value="Vaccinia Virus protein VP39"/>
    <property type="match status" value="1"/>
</dbReference>
<dbReference type="Gene3D" id="3.40.1630.10">
    <property type="entry name" value="YhiQ-like domain"/>
    <property type="match status" value="1"/>
</dbReference>
<dbReference type="HAMAP" id="MF_01523">
    <property type="entry name" value="16SrRNA_methyltr_J"/>
    <property type="match status" value="1"/>
</dbReference>
<dbReference type="InterPro" id="IPR007536">
    <property type="entry name" value="16SrRNA_methylTrfase_J"/>
</dbReference>
<dbReference type="InterPro" id="IPR029063">
    <property type="entry name" value="SAM-dependent_MTases_sf"/>
</dbReference>
<dbReference type="NCBIfam" id="NF008012">
    <property type="entry name" value="PRK10742.1"/>
    <property type="match status" value="1"/>
</dbReference>
<dbReference type="PANTHER" id="PTHR36112">
    <property type="entry name" value="RIBOSOMAL RNA SMALL SUBUNIT METHYLTRANSFERASE J"/>
    <property type="match status" value="1"/>
</dbReference>
<dbReference type="PANTHER" id="PTHR36112:SF1">
    <property type="entry name" value="RIBOSOMAL RNA SMALL SUBUNIT METHYLTRANSFERASE J"/>
    <property type="match status" value="1"/>
</dbReference>
<dbReference type="Pfam" id="PF04445">
    <property type="entry name" value="SAM_MT"/>
    <property type="match status" value="1"/>
</dbReference>
<dbReference type="SUPFAM" id="SSF53335">
    <property type="entry name" value="S-adenosyl-L-methionine-dependent methyltransferases"/>
    <property type="match status" value="1"/>
</dbReference>